<gene>
    <name type="ORF">DDB_G0283527</name>
</gene>
<keyword id="KW-1185">Reference proteome</keyword>
<dbReference type="EMBL" id="AAFI02000055">
    <property type="protein sequence ID" value="EAL65748.1"/>
    <property type="molecule type" value="Genomic_DNA"/>
</dbReference>
<dbReference type="RefSeq" id="XP_639090.1">
    <property type="nucleotide sequence ID" value="XM_633998.1"/>
</dbReference>
<dbReference type="EnsemblProtists" id="EAL65748">
    <property type="protein sequence ID" value="EAL65748"/>
    <property type="gene ID" value="DDB_G0283527"/>
</dbReference>
<dbReference type="GeneID" id="8624114"/>
<dbReference type="KEGG" id="ddi:DDB_G0283527"/>
<dbReference type="dictyBase" id="DDB_G0283527"/>
<dbReference type="HOGENOM" id="CLU_3000418_0_0_1"/>
<dbReference type="InParanoid" id="Q54R01"/>
<dbReference type="OMA" id="MITPIGK"/>
<dbReference type="PRO" id="PR:Q54R01"/>
<dbReference type="Proteomes" id="UP000002195">
    <property type="component" value="Chromosome 4"/>
</dbReference>
<evidence type="ECO:0000256" key="1">
    <source>
        <dbReference type="SAM" id="MobiDB-lite"/>
    </source>
</evidence>
<name>Y8505_DICDI</name>
<sequence length="57" mass="5816">MITPIGKNSNSNSNSNSNSNSNSNSNSNSNSNSNSNSNSNSNSNSNSNSNSNSNSNN</sequence>
<organism>
    <name type="scientific">Dictyostelium discoideum</name>
    <name type="common">Social amoeba</name>
    <dbReference type="NCBI Taxonomy" id="44689"/>
    <lineage>
        <taxon>Eukaryota</taxon>
        <taxon>Amoebozoa</taxon>
        <taxon>Evosea</taxon>
        <taxon>Eumycetozoa</taxon>
        <taxon>Dictyostelia</taxon>
        <taxon>Dictyosteliales</taxon>
        <taxon>Dictyosteliaceae</taxon>
        <taxon>Dictyostelium</taxon>
    </lineage>
</organism>
<reference key="1">
    <citation type="journal article" date="2005" name="Nature">
        <title>The genome of the social amoeba Dictyostelium discoideum.</title>
        <authorList>
            <person name="Eichinger L."/>
            <person name="Pachebat J.A."/>
            <person name="Gloeckner G."/>
            <person name="Rajandream M.A."/>
            <person name="Sucgang R."/>
            <person name="Berriman M."/>
            <person name="Song J."/>
            <person name="Olsen R."/>
            <person name="Szafranski K."/>
            <person name="Xu Q."/>
            <person name="Tunggal B."/>
            <person name="Kummerfeld S."/>
            <person name="Madera M."/>
            <person name="Konfortov B.A."/>
            <person name="Rivero F."/>
            <person name="Bankier A.T."/>
            <person name="Lehmann R."/>
            <person name="Hamlin N."/>
            <person name="Davies R."/>
            <person name="Gaudet P."/>
            <person name="Fey P."/>
            <person name="Pilcher K."/>
            <person name="Chen G."/>
            <person name="Saunders D."/>
            <person name="Sodergren E.J."/>
            <person name="Davis P."/>
            <person name="Kerhornou A."/>
            <person name="Nie X."/>
            <person name="Hall N."/>
            <person name="Anjard C."/>
            <person name="Hemphill L."/>
            <person name="Bason N."/>
            <person name="Farbrother P."/>
            <person name="Desany B."/>
            <person name="Just E."/>
            <person name="Morio T."/>
            <person name="Rost R."/>
            <person name="Churcher C.M."/>
            <person name="Cooper J."/>
            <person name="Haydock S."/>
            <person name="van Driessche N."/>
            <person name="Cronin A."/>
            <person name="Goodhead I."/>
            <person name="Muzny D.M."/>
            <person name="Mourier T."/>
            <person name="Pain A."/>
            <person name="Lu M."/>
            <person name="Harper D."/>
            <person name="Lindsay R."/>
            <person name="Hauser H."/>
            <person name="James K.D."/>
            <person name="Quiles M."/>
            <person name="Madan Babu M."/>
            <person name="Saito T."/>
            <person name="Buchrieser C."/>
            <person name="Wardroper A."/>
            <person name="Felder M."/>
            <person name="Thangavelu M."/>
            <person name="Johnson D."/>
            <person name="Knights A."/>
            <person name="Loulseged H."/>
            <person name="Mungall K.L."/>
            <person name="Oliver K."/>
            <person name="Price C."/>
            <person name="Quail M.A."/>
            <person name="Urushihara H."/>
            <person name="Hernandez J."/>
            <person name="Rabbinowitsch E."/>
            <person name="Steffen D."/>
            <person name="Sanders M."/>
            <person name="Ma J."/>
            <person name="Kohara Y."/>
            <person name="Sharp S."/>
            <person name="Simmonds M.N."/>
            <person name="Spiegler S."/>
            <person name="Tivey A."/>
            <person name="Sugano S."/>
            <person name="White B."/>
            <person name="Walker D."/>
            <person name="Woodward J.R."/>
            <person name="Winckler T."/>
            <person name="Tanaka Y."/>
            <person name="Shaulsky G."/>
            <person name="Schleicher M."/>
            <person name="Weinstock G.M."/>
            <person name="Rosenthal A."/>
            <person name="Cox E.C."/>
            <person name="Chisholm R.L."/>
            <person name="Gibbs R.A."/>
            <person name="Loomis W.F."/>
            <person name="Platzer M."/>
            <person name="Kay R.R."/>
            <person name="Williams J.G."/>
            <person name="Dear P.H."/>
            <person name="Noegel A.A."/>
            <person name="Barrell B.G."/>
            <person name="Kuspa A."/>
        </authorList>
    </citation>
    <scope>NUCLEOTIDE SEQUENCE [LARGE SCALE GENOMIC DNA]</scope>
    <source>
        <strain>AX4</strain>
    </source>
</reference>
<protein>
    <recommendedName>
        <fullName>Putative uncharacterized protein DDB_G0283527</fullName>
    </recommendedName>
</protein>
<feature type="chain" id="PRO_0000350911" description="Putative uncharacterized protein DDB_G0283527">
    <location>
        <begin position="1"/>
        <end position="57"/>
    </location>
</feature>
<feature type="region of interest" description="Disordered" evidence="1">
    <location>
        <begin position="1"/>
        <end position="57"/>
    </location>
</feature>
<feature type="compositionally biased region" description="Low complexity" evidence="1">
    <location>
        <begin position="8"/>
        <end position="57"/>
    </location>
</feature>
<accession>Q54R01</accession>
<proteinExistence type="predicted"/>